<accession>Q49SP4</accession>
<proteinExistence type="evidence at protein level"/>
<dbReference type="EC" id="4.2.3.75"/>
<dbReference type="EMBL" id="AY508729">
    <property type="protein sequence ID" value="AAS86322.1"/>
    <property type="molecule type" value="mRNA"/>
</dbReference>
<dbReference type="SMR" id="Q49SP4"/>
<dbReference type="BioCyc" id="MetaCyc:MONOMER-14835"/>
<dbReference type="UniPathway" id="UPA00213"/>
<dbReference type="GO" id="GO:0005829">
    <property type="term" value="C:cytosol"/>
    <property type="evidence" value="ECO:0007669"/>
    <property type="project" value="UniProtKB-SubCell"/>
</dbReference>
<dbReference type="GO" id="GO:0052577">
    <property type="term" value="F:germacrene-D synthase activity"/>
    <property type="evidence" value="ECO:0007669"/>
    <property type="project" value="UniProtKB-EC"/>
</dbReference>
<dbReference type="GO" id="GO:0000287">
    <property type="term" value="F:magnesium ion binding"/>
    <property type="evidence" value="ECO:0007669"/>
    <property type="project" value="InterPro"/>
</dbReference>
<dbReference type="GO" id="GO:0010334">
    <property type="term" value="F:sesquiterpene synthase activity"/>
    <property type="evidence" value="ECO:0000314"/>
    <property type="project" value="UniProtKB"/>
</dbReference>
<dbReference type="GO" id="GO:0016102">
    <property type="term" value="P:diterpenoid biosynthetic process"/>
    <property type="evidence" value="ECO:0007669"/>
    <property type="project" value="InterPro"/>
</dbReference>
<dbReference type="GO" id="GO:0045338">
    <property type="term" value="P:farnesyl diphosphate metabolic process"/>
    <property type="evidence" value="ECO:0000314"/>
    <property type="project" value="UniProtKB"/>
</dbReference>
<dbReference type="GO" id="GO:0051762">
    <property type="term" value="P:sesquiterpene biosynthetic process"/>
    <property type="evidence" value="ECO:0000314"/>
    <property type="project" value="UniProtKB"/>
</dbReference>
<dbReference type="CDD" id="cd00684">
    <property type="entry name" value="Terpene_cyclase_plant_C1"/>
    <property type="match status" value="1"/>
</dbReference>
<dbReference type="FunFam" id="1.10.600.10:FF:000007">
    <property type="entry name" value="Isoprene synthase, chloroplastic"/>
    <property type="match status" value="1"/>
</dbReference>
<dbReference type="FunFam" id="1.50.10.130:FF:000001">
    <property type="entry name" value="Isoprene synthase, chloroplastic"/>
    <property type="match status" value="1"/>
</dbReference>
<dbReference type="Gene3D" id="1.10.600.10">
    <property type="entry name" value="Farnesyl Diphosphate Synthase"/>
    <property type="match status" value="1"/>
</dbReference>
<dbReference type="Gene3D" id="1.50.10.130">
    <property type="entry name" value="Terpene synthase, N-terminal domain"/>
    <property type="match status" value="1"/>
</dbReference>
<dbReference type="InterPro" id="IPR008949">
    <property type="entry name" value="Isoprenoid_synthase_dom_sf"/>
</dbReference>
<dbReference type="InterPro" id="IPR034741">
    <property type="entry name" value="Terpene_cyclase-like_1_C"/>
</dbReference>
<dbReference type="InterPro" id="IPR044814">
    <property type="entry name" value="Terpene_cyclase_plant_C1"/>
</dbReference>
<dbReference type="InterPro" id="IPR001906">
    <property type="entry name" value="Terpene_synth_N"/>
</dbReference>
<dbReference type="InterPro" id="IPR036965">
    <property type="entry name" value="Terpene_synth_N_sf"/>
</dbReference>
<dbReference type="InterPro" id="IPR050148">
    <property type="entry name" value="Terpene_synthase-like"/>
</dbReference>
<dbReference type="InterPro" id="IPR005630">
    <property type="entry name" value="Terpene_synthase_metal-bd"/>
</dbReference>
<dbReference type="InterPro" id="IPR008930">
    <property type="entry name" value="Terpenoid_cyclase/PrenylTrfase"/>
</dbReference>
<dbReference type="PANTHER" id="PTHR31225:SF93">
    <property type="entry name" value="ALPHA-HUMULENE_(-)-(E)-BETA-CARYOPHYLLENE SYNTHASE"/>
    <property type="match status" value="1"/>
</dbReference>
<dbReference type="PANTHER" id="PTHR31225">
    <property type="entry name" value="OS04G0344100 PROTEIN-RELATED"/>
    <property type="match status" value="1"/>
</dbReference>
<dbReference type="Pfam" id="PF01397">
    <property type="entry name" value="Terpene_synth"/>
    <property type="match status" value="1"/>
</dbReference>
<dbReference type="Pfam" id="PF03936">
    <property type="entry name" value="Terpene_synth_C"/>
    <property type="match status" value="1"/>
</dbReference>
<dbReference type="SFLD" id="SFLDS00005">
    <property type="entry name" value="Isoprenoid_Synthase_Type_I"/>
    <property type="match status" value="1"/>
</dbReference>
<dbReference type="SFLD" id="SFLDG01019">
    <property type="entry name" value="Terpene_Cyclase_Like_1_C_Termi"/>
    <property type="match status" value="1"/>
</dbReference>
<dbReference type="SUPFAM" id="SSF48239">
    <property type="entry name" value="Terpenoid cyclases/Protein prenyltransferases"/>
    <property type="match status" value="1"/>
</dbReference>
<dbReference type="SUPFAM" id="SSF48576">
    <property type="entry name" value="Terpenoid synthases"/>
    <property type="match status" value="1"/>
</dbReference>
<sequence length="545" mass="64197">MDLNEITSSSRPLANYHPNVWGDRFLLHEPEFTCQAGEKQLVEELKEEVRRELKEASNDYLRQLKMVDAIQRLGIEYLFEEEIDEALRNLLAKFENYCKDNHDMYATALSFRLLRQHGYKVSCEVFDKFKDGEDGFKVEEVMAVLELFEATHMRIHGEDVLDQAFVFTRNYLQSIHATLSNPIAKQVHNALNGYSCRRGMPRIEARKYIPIYEEYGCHHKALLKLAKLDFNLLQSMHKRELTQLYRWWKDLEMPTKLPYIRDRLVETYFWDMGFYFEPQYALARNILVKVQCLVSIFDDTFDAYGAFKELQLFKDAIDRWSISCLDELPEYMQIIYKLVLDVFEEIESHMIKQGTSYRLDYAREAIKIVIGGYFDEAKWREEEYKPRMEEYMKVATKSAAYLTLIIVSFVGMKNDIATPQAFQWVLSEPQIITASLALARLSNDLVGIEFEKERKYIATAVELYEEEHKVSKEEAVLELRHETESAWKEINEALLEPTTFATPILDRILNSARVLEVFYDKTDRYTHVDLELQNIIAQLYIHPIP</sequence>
<evidence type="ECO:0000250" key="1"/>
<evidence type="ECO:0000269" key="2">
    <source>
    </source>
</evidence>
<evidence type="ECO:0000305" key="3"/>
<name>TPGD1_POGCB</name>
<protein>
    <recommendedName>
        <fullName>Germacrene D synthase 1</fullName>
        <ecNumber>4.2.3.75</ecNumber>
    </recommendedName>
    <alternativeName>
        <fullName>PatTpsB15</fullName>
    </alternativeName>
</protein>
<reference key="1">
    <citation type="journal article" date="2006" name="Arch. Biochem. Biophys.">
        <title>The diverse sesquiterpene profile of patchouli, Pogostemon cablin, is correlated with a limited number of sesquiterpene synthases.</title>
        <authorList>
            <person name="Deguerry F."/>
            <person name="Pastore L."/>
            <person name="Wu S."/>
            <person name="Clark A."/>
            <person name="Chappell J."/>
            <person name="Schalk M."/>
        </authorList>
    </citation>
    <scope>NUCLEOTIDE SEQUENCE [MRNA]</scope>
    <scope>FUNCTION</scope>
    <scope>CATALYTIC ACTIVITY</scope>
</reference>
<organism>
    <name type="scientific">Pogostemon cablin</name>
    <name type="common">Patchouli</name>
    <name type="synonym">Mentha cablin</name>
    <dbReference type="NCBI Taxonomy" id="28511"/>
    <lineage>
        <taxon>Eukaryota</taxon>
        <taxon>Viridiplantae</taxon>
        <taxon>Streptophyta</taxon>
        <taxon>Embryophyta</taxon>
        <taxon>Tracheophyta</taxon>
        <taxon>Spermatophyta</taxon>
        <taxon>Magnoliopsida</taxon>
        <taxon>eudicotyledons</taxon>
        <taxon>Gunneridae</taxon>
        <taxon>Pentapetalae</taxon>
        <taxon>asterids</taxon>
        <taxon>lamiids</taxon>
        <taxon>Lamiales</taxon>
        <taxon>Lamiaceae</taxon>
        <taxon>Lamioideae</taxon>
        <taxon>Pogostemoneae</taxon>
        <taxon>Pogostemon</taxon>
    </lineage>
</organism>
<feature type="chain" id="PRO_0000419751" description="Germacrene D synthase 1">
    <location>
        <begin position="1"/>
        <end position="545"/>
    </location>
</feature>
<feature type="short sequence motif" description="DDXXD motif">
    <location>
        <begin position="298"/>
        <end position="302"/>
    </location>
</feature>
<feature type="binding site" evidence="1">
    <location>
        <position position="298"/>
    </location>
    <ligand>
        <name>Mg(2+)</name>
        <dbReference type="ChEBI" id="CHEBI:18420"/>
        <label>1</label>
    </ligand>
</feature>
<feature type="binding site" evidence="1">
    <location>
        <position position="298"/>
    </location>
    <ligand>
        <name>Mg(2+)</name>
        <dbReference type="ChEBI" id="CHEBI:18420"/>
        <label>2</label>
    </ligand>
</feature>
<feature type="binding site" evidence="1">
    <location>
        <position position="302"/>
    </location>
    <ligand>
        <name>Mg(2+)</name>
        <dbReference type="ChEBI" id="CHEBI:18420"/>
        <label>1</label>
    </ligand>
</feature>
<feature type="binding site" evidence="1">
    <location>
        <position position="302"/>
    </location>
    <ligand>
        <name>Mg(2+)</name>
        <dbReference type="ChEBI" id="CHEBI:18420"/>
        <label>2</label>
    </ligand>
</feature>
<feature type="binding site" evidence="1">
    <location>
        <position position="443"/>
    </location>
    <ligand>
        <name>Mg(2+)</name>
        <dbReference type="ChEBI" id="CHEBI:18420"/>
        <label>3</label>
    </ligand>
</feature>
<feature type="binding site" evidence="1">
    <location>
        <position position="451"/>
    </location>
    <ligand>
        <name>Mg(2+)</name>
        <dbReference type="ChEBI" id="CHEBI:18420"/>
        <label>3</label>
    </ligand>
</feature>
<keyword id="KW-0963">Cytoplasm</keyword>
<keyword id="KW-0456">Lyase</keyword>
<keyword id="KW-0460">Magnesium</keyword>
<keyword id="KW-0479">Metal-binding</keyword>
<comment type="function">
    <text evidence="2">Sesquiterpene synthase involved in germacrene D biosynthesis. Also produces at least 13 additional sesquiterpene products, including germacrene C and (+)-germacrene A, beta-ylangene, (E)-beta-farnesene and (E,E)-alpha-farnesene.</text>
</comment>
<comment type="catalytic activity">
    <reaction evidence="2">
        <text>(2E,6E)-farnesyl diphosphate = (-)-germacrene D + diphosphate</text>
        <dbReference type="Rhea" id="RHEA:12016"/>
        <dbReference type="ChEBI" id="CHEBI:33019"/>
        <dbReference type="ChEBI" id="CHEBI:49044"/>
        <dbReference type="ChEBI" id="CHEBI:175763"/>
        <dbReference type="EC" id="4.2.3.75"/>
    </reaction>
</comment>
<comment type="cofactor">
    <cofactor evidence="1">
        <name>Mg(2+)</name>
        <dbReference type="ChEBI" id="CHEBI:18420"/>
    </cofactor>
    <text evidence="1">Binds 3 Mg(2+) ions per subunit.</text>
</comment>
<comment type="pathway">
    <text>Secondary metabolite biosynthesis; terpenoid biosynthesis.</text>
</comment>
<comment type="subcellular location">
    <subcellularLocation>
        <location evidence="1">Cytoplasm</location>
        <location evidence="1">Cytosol</location>
    </subcellularLocation>
</comment>
<comment type="domain">
    <text evidence="1">The Asp-Asp-Xaa-Xaa-Asp/Glu (DDXXD/E) motif is important for the catalytic activity, presumably through binding to Mg(2+).</text>
</comment>
<comment type="similarity">
    <text evidence="3">Belongs to the terpene synthase family.</text>
</comment>